<keyword id="KW-0025">Alternative splicing</keyword>
<keyword id="KW-0238">DNA-binding</keyword>
<keyword id="KW-0539">Nucleus</keyword>
<keyword id="KW-1185">Reference proteome</keyword>
<keyword id="KW-0677">Repeat</keyword>
<keyword id="KW-0346">Stress response</keyword>
<keyword id="KW-0804">Transcription</keyword>
<keyword id="KW-0805">Transcription regulation</keyword>
<dbReference type="EMBL" id="AJ430052">
    <property type="protein sequence ID" value="CAD22534.1"/>
    <property type="molecule type" value="mRNA"/>
</dbReference>
<dbReference type="EMBL" id="FJ940212">
    <property type="protein sequence ID" value="ADB84634.1"/>
    <property type="molecule type" value="mRNA"/>
</dbReference>
<dbReference type="EMBL" id="FJ940219">
    <property type="protein sequence ID" value="ADB84641.1"/>
    <property type="molecule type" value="mRNA"/>
</dbReference>
<dbReference type="EMBL" id="AP003241">
    <property type="protein sequence ID" value="BAD81765.1"/>
    <property type="status" value="ALT_INIT"/>
    <property type="molecule type" value="Genomic_DNA"/>
</dbReference>
<dbReference type="EMBL" id="AP008207">
    <property type="protein sequence ID" value="BAF06681.1"/>
    <property type="molecule type" value="Genomic_DNA"/>
</dbReference>
<dbReference type="EMBL" id="AP014957">
    <property type="protein sequence ID" value="BAS75160.1"/>
    <property type="molecule type" value="Genomic_DNA"/>
</dbReference>
<dbReference type="EMBL" id="CM000138">
    <property type="protein sequence ID" value="EEE55651.1"/>
    <property type="status" value="ALT_INIT"/>
    <property type="molecule type" value="Genomic_DNA"/>
</dbReference>
<dbReference type="RefSeq" id="XP_015616493.1">
    <property type="nucleotide sequence ID" value="XM_015761007.1"/>
</dbReference>
<dbReference type="RefSeq" id="XP_015616500.1">
    <property type="nucleotide sequence ID" value="XM_015761014.1"/>
</dbReference>
<dbReference type="SMR" id="Q0JHU7"/>
<dbReference type="FunCoup" id="Q0JHU7">
    <property type="interactions" value="487"/>
</dbReference>
<dbReference type="STRING" id="39947.Q0JHU7"/>
<dbReference type="PaxDb" id="39947-Q0JHU7"/>
<dbReference type="EnsemblPlants" id="Os01t0841500-01">
    <molecule id="Q0JHU7-1"/>
    <property type="protein sequence ID" value="Os01t0841500-01"/>
    <property type="gene ID" value="Os01g0841500"/>
</dbReference>
<dbReference type="Gramene" id="Os01t0841500-01">
    <molecule id="Q0JHU7-1"/>
    <property type="protein sequence ID" value="Os01t0841500-01"/>
    <property type="gene ID" value="Os01g0841500"/>
</dbReference>
<dbReference type="KEGG" id="dosa:Os01g0841500"/>
<dbReference type="eggNOG" id="KOG0048">
    <property type="taxonomic scope" value="Eukaryota"/>
</dbReference>
<dbReference type="HOGENOM" id="CLU_016150_3_1_1"/>
<dbReference type="InParanoid" id="Q0JHU7"/>
<dbReference type="OMA" id="ARSKRMA"/>
<dbReference type="OrthoDB" id="2143914at2759"/>
<dbReference type="Proteomes" id="UP000000763">
    <property type="component" value="Chromosome 1"/>
</dbReference>
<dbReference type="Proteomes" id="UP000007752">
    <property type="component" value="Chromosome 1"/>
</dbReference>
<dbReference type="Proteomes" id="UP000059680">
    <property type="component" value="Chromosome 1"/>
</dbReference>
<dbReference type="GO" id="GO:0005634">
    <property type="term" value="C:nucleus"/>
    <property type="evidence" value="ECO:0000314"/>
    <property type="project" value="UniProtKB"/>
</dbReference>
<dbReference type="GO" id="GO:0000981">
    <property type="term" value="F:DNA-binding transcription factor activity, RNA polymerase II-specific"/>
    <property type="evidence" value="ECO:0000318"/>
    <property type="project" value="GO_Central"/>
</dbReference>
<dbReference type="GO" id="GO:0000978">
    <property type="term" value="F:RNA polymerase II cis-regulatory region sequence-specific DNA binding"/>
    <property type="evidence" value="ECO:0000318"/>
    <property type="project" value="GO_Central"/>
</dbReference>
<dbReference type="GO" id="GO:0043565">
    <property type="term" value="F:sequence-specific DNA binding"/>
    <property type="evidence" value="ECO:0000314"/>
    <property type="project" value="UniProtKB"/>
</dbReference>
<dbReference type="GO" id="GO:0045893">
    <property type="term" value="P:positive regulation of DNA-templated transcription"/>
    <property type="evidence" value="ECO:0000314"/>
    <property type="project" value="UniProtKB"/>
</dbReference>
<dbReference type="GO" id="GO:1901002">
    <property type="term" value="P:positive regulation of response to salt stress"/>
    <property type="evidence" value="ECO:0000315"/>
    <property type="project" value="UniProtKB"/>
</dbReference>
<dbReference type="GO" id="GO:1902584">
    <property type="term" value="P:positive regulation of response to water deprivation"/>
    <property type="evidence" value="ECO:0000315"/>
    <property type="project" value="UniProtKB"/>
</dbReference>
<dbReference type="GO" id="GO:0006355">
    <property type="term" value="P:regulation of DNA-templated transcription"/>
    <property type="evidence" value="ECO:0000318"/>
    <property type="project" value="GO_Central"/>
</dbReference>
<dbReference type="GO" id="GO:0009409">
    <property type="term" value="P:response to cold"/>
    <property type="evidence" value="ECO:0000315"/>
    <property type="project" value="UniProtKB"/>
</dbReference>
<dbReference type="CDD" id="cd00167">
    <property type="entry name" value="SANT"/>
    <property type="match status" value="3"/>
</dbReference>
<dbReference type="FunFam" id="1.10.10.60:FF:000324">
    <property type="entry name" value="Transcription factor MYB3R-2"/>
    <property type="match status" value="1"/>
</dbReference>
<dbReference type="FunFam" id="1.10.10.60:FF:000010">
    <property type="entry name" value="Transcriptional activator Myb isoform A"/>
    <property type="match status" value="1"/>
</dbReference>
<dbReference type="FunFam" id="1.10.10.60:FF:000016">
    <property type="entry name" value="Transcriptional activator Myb isoform A"/>
    <property type="match status" value="1"/>
</dbReference>
<dbReference type="Gene3D" id="1.10.10.60">
    <property type="entry name" value="Homeodomain-like"/>
    <property type="match status" value="3"/>
</dbReference>
<dbReference type="InterPro" id="IPR009057">
    <property type="entry name" value="Homeodomain-like_sf"/>
</dbReference>
<dbReference type="InterPro" id="IPR017930">
    <property type="entry name" value="Myb_dom"/>
</dbReference>
<dbReference type="InterPro" id="IPR050560">
    <property type="entry name" value="MYB_TF"/>
</dbReference>
<dbReference type="InterPro" id="IPR001005">
    <property type="entry name" value="SANT/Myb"/>
</dbReference>
<dbReference type="InterPro" id="IPR017884">
    <property type="entry name" value="SANT_dom"/>
</dbReference>
<dbReference type="PANTHER" id="PTHR45614">
    <property type="entry name" value="MYB PROTEIN-RELATED"/>
    <property type="match status" value="1"/>
</dbReference>
<dbReference type="Pfam" id="PF00249">
    <property type="entry name" value="Myb_DNA-binding"/>
    <property type="match status" value="3"/>
</dbReference>
<dbReference type="SMART" id="SM00717">
    <property type="entry name" value="SANT"/>
    <property type="match status" value="3"/>
</dbReference>
<dbReference type="SUPFAM" id="SSF46689">
    <property type="entry name" value="Homeodomain-like"/>
    <property type="match status" value="2"/>
</dbReference>
<dbReference type="PROSITE" id="PS51294">
    <property type="entry name" value="HTH_MYB"/>
    <property type="match status" value="3"/>
</dbReference>
<reference key="1">
    <citation type="submission" date="2002-02" db="EMBL/GenBank/DDBJ databases">
        <title>Isolation of Osmyb15, a rice MYB protein with novel structure, playing possible significant roles during evolution from plant MYB3R to R2R3 MYB.</title>
        <authorList>
            <person name="Xu S."/>
            <person name="Huang W."/>
            <person name="Xu Z."/>
            <person name="Luo D."/>
            <person name="Xue H."/>
        </authorList>
    </citation>
    <scope>NUCLEOTIDE SEQUENCE [MRNA]</scope>
</reference>
<reference key="2">
    <citation type="submission" date="2009-04" db="EMBL/GenBank/DDBJ databases">
        <title>Oryza sativa japonica group clone KCS635B12 Myb-like protein mRNA, complete cds.</title>
        <authorList>
            <person name="Yoon U.H."/>
            <person name="Lee G.S."/>
            <person name="Lee J.S."/>
            <person name="Hahn J.H."/>
            <person name="Kim C.K."/>
            <person name="Yun D.W."/>
            <person name="Kim Y.H."/>
        </authorList>
    </citation>
    <scope>NUCLEOTIDE SEQUENCE [MRNA] (ISOFORMS 1 AND 2)</scope>
    <source>
        <strain>cv. Ilpoombyeo</strain>
        <tissue>Seed</tissue>
    </source>
</reference>
<reference key="3">
    <citation type="journal article" date="2002" name="Nature">
        <title>The genome sequence and structure of rice chromosome 1.</title>
        <authorList>
            <person name="Sasaki T."/>
            <person name="Matsumoto T."/>
            <person name="Yamamoto K."/>
            <person name="Sakata K."/>
            <person name="Baba T."/>
            <person name="Katayose Y."/>
            <person name="Wu J."/>
            <person name="Niimura Y."/>
            <person name="Cheng Z."/>
            <person name="Nagamura Y."/>
            <person name="Antonio B.A."/>
            <person name="Kanamori H."/>
            <person name="Hosokawa S."/>
            <person name="Masukawa M."/>
            <person name="Arikawa K."/>
            <person name="Chiden Y."/>
            <person name="Hayashi M."/>
            <person name="Okamoto M."/>
            <person name="Ando T."/>
            <person name="Aoki H."/>
            <person name="Arita K."/>
            <person name="Hamada M."/>
            <person name="Harada C."/>
            <person name="Hijishita S."/>
            <person name="Honda M."/>
            <person name="Ichikawa Y."/>
            <person name="Idonuma A."/>
            <person name="Iijima M."/>
            <person name="Ikeda M."/>
            <person name="Ikeno M."/>
            <person name="Ito S."/>
            <person name="Ito T."/>
            <person name="Ito Y."/>
            <person name="Ito Y."/>
            <person name="Iwabuchi A."/>
            <person name="Kamiya K."/>
            <person name="Karasawa W."/>
            <person name="Katagiri S."/>
            <person name="Kikuta A."/>
            <person name="Kobayashi N."/>
            <person name="Kono I."/>
            <person name="Machita K."/>
            <person name="Maehara T."/>
            <person name="Mizuno H."/>
            <person name="Mizubayashi T."/>
            <person name="Mukai Y."/>
            <person name="Nagasaki H."/>
            <person name="Nakashima M."/>
            <person name="Nakama Y."/>
            <person name="Nakamichi Y."/>
            <person name="Nakamura M."/>
            <person name="Namiki N."/>
            <person name="Negishi M."/>
            <person name="Ohta I."/>
            <person name="Ono N."/>
            <person name="Saji S."/>
            <person name="Sakai K."/>
            <person name="Shibata M."/>
            <person name="Shimokawa T."/>
            <person name="Shomura A."/>
            <person name="Song J."/>
            <person name="Takazaki Y."/>
            <person name="Terasawa K."/>
            <person name="Tsuji K."/>
            <person name="Waki K."/>
            <person name="Yamagata H."/>
            <person name="Yamane H."/>
            <person name="Yoshiki S."/>
            <person name="Yoshihara R."/>
            <person name="Yukawa K."/>
            <person name="Zhong H."/>
            <person name="Iwama H."/>
            <person name="Endo T."/>
            <person name="Ito H."/>
            <person name="Hahn J.H."/>
            <person name="Kim H.-I."/>
            <person name="Eun M.-Y."/>
            <person name="Yano M."/>
            <person name="Jiang J."/>
            <person name="Gojobori T."/>
        </authorList>
    </citation>
    <scope>NUCLEOTIDE SEQUENCE [LARGE SCALE GENOMIC DNA]</scope>
    <source>
        <strain>cv. Nipponbare</strain>
    </source>
</reference>
<reference key="4">
    <citation type="journal article" date="2005" name="Nature">
        <title>The map-based sequence of the rice genome.</title>
        <authorList>
            <consortium name="International rice genome sequencing project (IRGSP)"/>
        </authorList>
    </citation>
    <scope>NUCLEOTIDE SEQUENCE [LARGE SCALE GENOMIC DNA]</scope>
    <source>
        <strain>cv. Nipponbare</strain>
    </source>
</reference>
<reference key="5">
    <citation type="journal article" date="2008" name="Nucleic Acids Res.">
        <title>The rice annotation project database (RAP-DB): 2008 update.</title>
        <authorList>
            <consortium name="The rice annotation project (RAP)"/>
        </authorList>
    </citation>
    <scope>GENOME REANNOTATION</scope>
    <source>
        <strain>cv. Nipponbare</strain>
    </source>
</reference>
<reference key="6">
    <citation type="journal article" date="2013" name="Rice">
        <title>Improvement of the Oryza sativa Nipponbare reference genome using next generation sequence and optical map data.</title>
        <authorList>
            <person name="Kawahara Y."/>
            <person name="de la Bastide M."/>
            <person name="Hamilton J.P."/>
            <person name="Kanamori H."/>
            <person name="McCombie W.R."/>
            <person name="Ouyang S."/>
            <person name="Schwartz D.C."/>
            <person name="Tanaka T."/>
            <person name="Wu J."/>
            <person name="Zhou S."/>
            <person name="Childs K.L."/>
            <person name="Davidson R.M."/>
            <person name="Lin H."/>
            <person name="Quesada-Ocampo L."/>
            <person name="Vaillancourt B."/>
            <person name="Sakai H."/>
            <person name="Lee S.S."/>
            <person name="Kim J."/>
            <person name="Numa H."/>
            <person name="Itoh T."/>
            <person name="Buell C.R."/>
            <person name="Matsumoto T."/>
        </authorList>
    </citation>
    <scope>GENOME REANNOTATION</scope>
    <source>
        <strain>cv. Nipponbare</strain>
    </source>
</reference>
<reference key="7">
    <citation type="journal article" date="2005" name="PLoS Biol.">
        <title>The genomes of Oryza sativa: a history of duplications.</title>
        <authorList>
            <person name="Yu J."/>
            <person name="Wang J."/>
            <person name="Lin W."/>
            <person name="Li S."/>
            <person name="Li H."/>
            <person name="Zhou J."/>
            <person name="Ni P."/>
            <person name="Dong W."/>
            <person name="Hu S."/>
            <person name="Zeng C."/>
            <person name="Zhang J."/>
            <person name="Zhang Y."/>
            <person name="Li R."/>
            <person name="Xu Z."/>
            <person name="Li S."/>
            <person name="Li X."/>
            <person name="Zheng H."/>
            <person name="Cong L."/>
            <person name="Lin L."/>
            <person name="Yin J."/>
            <person name="Geng J."/>
            <person name="Li G."/>
            <person name="Shi J."/>
            <person name="Liu J."/>
            <person name="Lv H."/>
            <person name="Li J."/>
            <person name="Wang J."/>
            <person name="Deng Y."/>
            <person name="Ran L."/>
            <person name="Shi X."/>
            <person name="Wang X."/>
            <person name="Wu Q."/>
            <person name="Li C."/>
            <person name="Ren X."/>
            <person name="Wang J."/>
            <person name="Wang X."/>
            <person name="Li D."/>
            <person name="Liu D."/>
            <person name="Zhang X."/>
            <person name="Ji Z."/>
            <person name="Zhao W."/>
            <person name="Sun Y."/>
            <person name="Zhang Z."/>
            <person name="Bao J."/>
            <person name="Han Y."/>
            <person name="Dong L."/>
            <person name="Ji J."/>
            <person name="Chen P."/>
            <person name="Wu S."/>
            <person name="Liu J."/>
            <person name="Xiao Y."/>
            <person name="Bu D."/>
            <person name="Tan J."/>
            <person name="Yang L."/>
            <person name="Ye C."/>
            <person name="Zhang J."/>
            <person name="Xu J."/>
            <person name="Zhou Y."/>
            <person name="Yu Y."/>
            <person name="Zhang B."/>
            <person name="Zhuang S."/>
            <person name="Wei H."/>
            <person name="Liu B."/>
            <person name="Lei M."/>
            <person name="Yu H."/>
            <person name="Li Y."/>
            <person name="Xu H."/>
            <person name="Wei S."/>
            <person name="He X."/>
            <person name="Fang L."/>
            <person name="Zhang Z."/>
            <person name="Zhang Y."/>
            <person name="Huang X."/>
            <person name="Su Z."/>
            <person name="Tong W."/>
            <person name="Li J."/>
            <person name="Tong Z."/>
            <person name="Li S."/>
            <person name="Ye J."/>
            <person name="Wang L."/>
            <person name="Fang L."/>
            <person name="Lei T."/>
            <person name="Chen C.-S."/>
            <person name="Chen H.-C."/>
            <person name="Xu Z."/>
            <person name="Li H."/>
            <person name="Huang H."/>
            <person name="Zhang F."/>
            <person name="Xu H."/>
            <person name="Li N."/>
            <person name="Zhao C."/>
            <person name="Li S."/>
            <person name="Dong L."/>
            <person name="Huang Y."/>
            <person name="Li L."/>
            <person name="Xi Y."/>
            <person name="Qi Q."/>
            <person name="Li W."/>
            <person name="Zhang B."/>
            <person name="Hu W."/>
            <person name="Zhang Y."/>
            <person name="Tian X."/>
            <person name="Jiao Y."/>
            <person name="Liang X."/>
            <person name="Jin J."/>
            <person name="Gao L."/>
            <person name="Zheng W."/>
            <person name="Hao B."/>
            <person name="Liu S.-M."/>
            <person name="Wang W."/>
            <person name="Yuan L."/>
            <person name="Cao M."/>
            <person name="McDermott J."/>
            <person name="Samudrala R."/>
            <person name="Wang J."/>
            <person name="Wong G.K.-S."/>
            <person name="Yang H."/>
        </authorList>
    </citation>
    <scope>NUCLEOTIDE SEQUENCE [LARGE SCALE GENOMIC DNA]</scope>
    <source>
        <strain>cv. Nipponbare</strain>
    </source>
</reference>
<reference key="8">
    <citation type="journal article" date="2007" name="Plant Physiol.">
        <title>Overexpression of an R1R2R3 MYB gene, OsMYB3R-2, increases tolerance to freezing, drought, and salt stress in transgenic Arabidopsis.</title>
        <authorList>
            <person name="Dai X."/>
            <person name="Xu Y."/>
            <person name="Ma Q."/>
            <person name="Xu W."/>
            <person name="Wang T."/>
            <person name="Xue Y."/>
            <person name="Chong K."/>
        </authorList>
    </citation>
    <scope>FUNCTION</scope>
    <scope>SUBCELLULAR LOCATION</scope>
    <scope>TISSUE SPECIFICITY</scope>
    <scope>INDUCTION</scope>
</reference>
<reference key="9">
    <citation type="journal article" date="2009" name="Plant Physiol.">
        <title>Enhanced tolerance to chilling stress in OsMYB3R-2 transgenic rice is mediated by alteration in cell cycle and ectopic expression of stress genes.</title>
        <authorList>
            <person name="Ma Q."/>
            <person name="Dai X."/>
            <person name="Xu Y."/>
            <person name="Guo J."/>
            <person name="Liu Y."/>
            <person name="Chen N."/>
            <person name="Xiao J."/>
            <person name="Zhang D."/>
            <person name="Xu Z."/>
            <person name="Zhang X."/>
            <person name="Chong K."/>
        </authorList>
    </citation>
    <scope>FUNCTION</scope>
</reference>
<protein>
    <recommendedName>
        <fullName evidence="6">Transcription factor MYB3R-2</fullName>
    </recommendedName>
    <alternativeName>
        <fullName evidence="6">Myb-related protein MYB3R-2</fullName>
        <shortName evidence="5">OsMYB3R-2</shortName>
    </alternativeName>
</protein>
<proteinExistence type="evidence at transcript level"/>
<gene>
    <name evidence="5" type="primary">MYB3R-2</name>
    <name evidence="9" type="synonym">MYB15</name>
    <name evidence="8" type="ordered locus">Os01g0841500</name>
    <name evidence="6" type="ordered locus">LOC_Os01g62410</name>
    <name evidence="10" type="ORF">OsJ_04034</name>
    <name evidence="7" type="ORF">P0408C03.41</name>
</gene>
<comment type="function">
    <text evidence="3 4">Transcription factor involved in abiotic stress responses (PubMed:17293435, PubMed:19279197). May play a regulatory role in tolerance to salt, cold, and drought stresses (PubMed:17293435). Transcriptional activator that binds specifically to a mitosis-specific activator cis-element 5'-(T/C)C(T/C)AACGG(T/C)(T/C)A-3', found in promoters of cyclin genes such as CYCB1-1 and KNOLLE (AC Q84R43). Positively regulates a subset of G2/M phase-specific genes, including CYCB1-1, CYCB2-1, CYCB2-2, and CDC20.1 in response to cold treatment (PubMed:19279197).</text>
</comment>
<comment type="subcellular location">
    <subcellularLocation>
        <location evidence="1 3">Nucleus</location>
    </subcellularLocation>
</comment>
<comment type="alternative products">
    <event type="alternative splicing"/>
    <isoform>
        <id>Q0JHU7-1</id>
        <name>1</name>
        <sequence type="displayed"/>
    </isoform>
    <isoform>
        <id>Q0JHU7-2</id>
        <name>2</name>
        <sequence type="described" ref="VSP_058917"/>
    </isoform>
</comment>
<comment type="tissue specificity">
    <text evidence="3">Expressed in roots, leaves, stems and spikes.</text>
</comment>
<comment type="induction">
    <text evidence="3">Induced by cold, drought and salt stresses.</text>
</comment>
<comment type="miscellaneous">
    <text evidence="3 4">Plants over-expressing MYB3R-2 show increased tolerance to freezing (PubMed:19279197). Plants over-expressing MYB3R-2 show retarded growth, increased tolerance to cold, drought and salt stresses, and have decreased sensitivity to seed germination inhibition by abscisic acid (ABA) or salt (PubMed:17293435).</text>
</comment>
<comment type="sequence caution" evidence="6">
    <conflict type="erroneous initiation">
        <sequence resource="EMBL-CDS" id="BAD81765"/>
    </conflict>
    <text>Truncated N-terminus.</text>
</comment>
<comment type="sequence caution" evidence="6">
    <conflict type="erroneous initiation">
        <sequence resource="EMBL-CDS" id="EEE55651"/>
    </conflict>
    <text>Truncated N-terminus.</text>
</comment>
<name>MB3R2_ORYSJ</name>
<feature type="chain" id="PRO_0000439824" description="Transcription factor MYB3R-2">
    <location>
        <begin position="1"/>
        <end position="587"/>
    </location>
</feature>
<feature type="domain" description="HTH myb-type 1" evidence="1">
    <location>
        <begin position="62"/>
        <end position="113"/>
    </location>
</feature>
<feature type="domain" description="HTH myb-type 2" evidence="1">
    <location>
        <begin position="114"/>
        <end position="169"/>
    </location>
</feature>
<feature type="domain" description="HTH myb-type 3" evidence="1">
    <location>
        <begin position="170"/>
        <end position="220"/>
    </location>
</feature>
<feature type="DNA-binding region" description="H-T-H motif" evidence="1">
    <location>
        <begin position="90"/>
        <end position="113"/>
    </location>
</feature>
<feature type="DNA-binding region" description="H-T-H motif" evidence="1">
    <location>
        <begin position="142"/>
        <end position="165"/>
    </location>
</feature>
<feature type="DNA-binding region" description="H-T-H motif" evidence="1">
    <location>
        <begin position="193"/>
        <end position="216"/>
    </location>
</feature>
<feature type="region of interest" description="Disordered" evidence="2">
    <location>
        <begin position="14"/>
        <end position="74"/>
    </location>
</feature>
<feature type="region of interest" description="Disordered" evidence="2">
    <location>
        <begin position="441"/>
        <end position="461"/>
    </location>
</feature>
<feature type="compositionally biased region" description="Low complexity" evidence="2">
    <location>
        <begin position="43"/>
        <end position="54"/>
    </location>
</feature>
<feature type="splice variant" id="VSP_058917" description="In isoform 2.">
    <original>MGAMAMVEQEGCVENRQPLAASSSSVSDGSSYGGGGGGLAQMSPPVSSSANSISGLRRTSGPIRRAKGGWTPEEDETLRKAVEAYKGRNWKKI</original>
    <variation>MYLYA</variation>
    <location>
        <begin position="1"/>
        <end position="93"/>
    </location>
</feature>
<feature type="sequence conflict" description="In Ref. 2; ADB84641 and 1; CAD22534." evidence="6" ref="2 1">
    <original>V</original>
    <variation>A</variation>
    <location>
        <position position="199"/>
    </location>
</feature>
<feature type="sequence conflict" description="In Ref. 2; ADB84641 and 1; CAD22534." evidence="6" ref="2 1">
    <original>E</original>
    <variation>G</variation>
    <location>
        <position position="460"/>
    </location>
</feature>
<feature type="sequence conflict" description="In Ref. 2; ADB84641 and 1; CAD22534." evidence="6" ref="2 1">
    <original>Y</original>
    <variation>H</variation>
    <location>
        <position position="472"/>
    </location>
</feature>
<sequence length="587" mass="64100">MGAMAMVEQEGCVENRQPLAASSSSVSDGSSYGGGGGGLAQMSPPVSSSANSISGLRRTSGPIRRAKGGWTPEEDETLRKAVEAYKGRNWKKIAECFPYRTEVQCLHRWQKVLNPELIKGPWTQEEDDQIIDLVKKYGPTKWSVIAKALPGRIGKQCRERWHNHLNPEIRKDAWTTEEEQALINAHRIYGNKWAEIAKVLPGRTDNSIKNHWNSSLRKKQDMYNTSNNMVVPKLLVHDKFKDKPKLMAMEGHLDLNKAPIINSKDQPGTAHRSNCSGFLSRSSLPTAQPLTSREASVVDGSAVTLVAQALESDSVRGKGLEIDSVHEKGLEVNSAPDHTGNSWTIQLEAAPSKGEAELSLKNEARSLGPLCYQIPNMEDVVPVSSSLFSDHLTGNHTSEHCGDDILSPAGCTTPPPTKGKLTSQLSVDSILKSAANSFPGTPSILKRRKRDKSTPVSASEMKISGSNTDRFYTPMGMEPATATPESFKTTSFLSLGSLDGSVKSFDVSPQYRARSKRMALTKTVEKQLDFSSDGLDTCGSEILNSSCNNSQSTLSITEAPKLKEKEHAVQLENLTKNFAHTTNLDVT</sequence>
<accession>Q0JHU7</accession>
<accession>D6BV30</accession>
<accession>Q5N9U1</accession>
<accession>Q5QT31</accession>
<evidence type="ECO:0000255" key="1">
    <source>
        <dbReference type="PROSITE-ProRule" id="PRU00625"/>
    </source>
</evidence>
<evidence type="ECO:0000256" key="2">
    <source>
        <dbReference type="SAM" id="MobiDB-lite"/>
    </source>
</evidence>
<evidence type="ECO:0000269" key="3">
    <source>
    </source>
</evidence>
<evidence type="ECO:0000269" key="4">
    <source>
    </source>
</evidence>
<evidence type="ECO:0000303" key="5">
    <source>
    </source>
</evidence>
<evidence type="ECO:0000305" key="6"/>
<evidence type="ECO:0000312" key="7">
    <source>
        <dbReference type="EMBL" id="BAD81765.1"/>
    </source>
</evidence>
<evidence type="ECO:0000312" key="8">
    <source>
        <dbReference type="EMBL" id="BAF06681.1"/>
    </source>
</evidence>
<evidence type="ECO:0000312" key="9">
    <source>
        <dbReference type="EMBL" id="CAD22534.1"/>
    </source>
</evidence>
<evidence type="ECO:0000312" key="10">
    <source>
        <dbReference type="EMBL" id="EEE55651.1"/>
    </source>
</evidence>
<organism>
    <name type="scientific">Oryza sativa subsp. japonica</name>
    <name type="common">Rice</name>
    <dbReference type="NCBI Taxonomy" id="39947"/>
    <lineage>
        <taxon>Eukaryota</taxon>
        <taxon>Viridiplantae</taxon>
        <taxon>Streptophyta</taxon>
        <taxon>Embryophyta</taxon>
        <taxon>Tracheophyta</taxon>
        <taxon>Spermatophyta</taxon>
        <taxon>Magnoliopsida</taxon>
        <taxon>Liliopsida</taxon>
        <taxon>Poales</taxon>
        <taxon>Poaceae</taxon>
        <taxon>BOP clade</taxon>
        <taxon>Oryzoideae</taxon>
        <taxon>Oryzeae</taxon>
        <taxon>Oryzinae</taxon>
        <taxon>Oryza</taxon>
        <taxon>Oryza sativa</taxon>
    </lineage>
</organism>